<keyword id="KW-0143">Chaperone</keyword>
<keyword id="KW-0963">Cytoplasm</keyword>
<keyword id="KW-0235">DNA replication</keyword>
<keyword id="KW-0479">Metal-binding</keyword>
<keyword id="KW-0677">Repeat</keyword>
<keyword id="KW-0346">Stress response</keyword>
<keyword id="KW-0862">Zinc</keyword>
<keyword id="KW-0863">Zinc-finger</keyword>
<accession>B2SXC7</accession>
<dbReference type="EMBL" id="CP001052">
    <property type="protein sequence ID" value="ACD15162.1"/>
    <property type="molecule type" value="Genomic_DNA"/>
</dbReference>
<dbReference type="RefSeq" id="WP_012431798.1">
    <property type="nucleotide sequence ID" value="NC_010681.1"/>
</dbReference>
<dbReference type="SMR" id="B2SXC7"/>
<dbReference type="STRING" id="398527.Bphyt_0738"/>
<dbReference type="GeneID" id="97305700"/>
<dbReference type="KEGG" id="bpy:Bphyt_0738"/>
<dbReference type="eggNOG" id="COG0484">
    <property type="taxonomic scope" value="Bacteria"/>
</dbReference>
<dbReference type="HOGENOM" id="CLU_017633_0_7_4"/>
<dbReference type="OrthoDB" id="9779889at2"/>
<dbReference type="Proteomes" id="UP000001739">
    <property type="component" value="Chromosome 1"/>
</dbReference>
<dbReference type="GO" id="GO:0005737">
    <property type="term" value="C:cytoplasm"/>
    <property type="evidence" value="ECO:0007669"/>
    <property type="project" value="UniProtKB-SubCell"/>
</dbReference>
<dbReference type="GO" id="GO:0005524">
    <property type="term" value="F:ATP binding"/>
    <property type="evidence" value="ECO:0007669"/>
    <property type="project" value="InterPro"/>
</dbReference>
<dbReference type="GO" id="GO:0031072">
    <property type="term" value="F:heat shock protein binding"/>
    <property type="evidence" value="ECO:0007669"/>
    <property type="project" value="InterPro"/>
</dbReference>
<dbReference type="GO" id="GO:0051082">
    <property type="term" value="F:unfolded protein binding"/>
    <property type="evidence" value="ECO:0007669"/>
    <property type="project" value="UniProtKB-UniRule"/>
</dbReference>
<dbReference type="GO" id="GO:0008270">
    <property type="term" value="F:zinc ion binding"/>
    <property type="evidence" value="ECO:0007669"/>
    <property type="project" value="UniProtKB-UniRule"/>
</dbReference>
<dbReference type="GO" id="GO:0051085">
    <property type="term" value="P:chaperone cofactor-dependent protein refolding"/>
    <property type="evidence" value="ECO:0007669"/>
    <property type="project" value="TreeGrafter"/>
</dbReference>
<dbReference type="GO" id="GO:0006260">
    <property type="term" value="P:DNA replication"/>
    <property type="evidence" value="ECO:0007669"/>
    <property type="project" value="UniProtKB-KW"/>
</dbReference>
<dbReference type="GO" id="GO:0042026">
    <property type="term" value="P:protein refolding"/>
    <property type="evidence" value="ECO:0007669"/>
    <property type="project" value="TreeGrafter"/>
</dbReference>
<dbReference type="GO" id="GO:0009408">
    <property type="term" value="P:response to heat"/>
    <property type="evidence" value="ECO:0007669"/>
    <property type="project" value="InterPro"/>
</dbReference>
<dbReference type="CDD" id="cd06257">
    <property type="entry name" value="DnaJ"/>
    <property type="match status" value="1"/>
</dbReference>
<dbReference type="CDD" id="cd10747">
    <property type="entry name" value="DnaJ_C"/>
    <property type="match status" value="1"/>
</dbReference>
<dbReference type="CDD" id="cd10719">
    <property type="entry name" value="DnaJ_zf"/>
    <property type="match status" value="1"/>
</dbReference>
<dbReference type="FunFam" id="1.10.287.110:FF:000031">
    <property type="entry name" value="Molecular chaperone DnaJ"/>
    <property type="match status" value="1"/>
</dbReference>
<dbReference type="FunFam" id="2.10.230.10:FF:000002">
    <property type="entry name" value="Molecular chaperone DnaJ"/>
    <property type="match status" value="1"/>
</dbReference>
<dbReference type="FunFam" id="2.60.260.20:FF:000004">
    <property type="entry name" value="Molecular chaperone DnaJ"/>
    <property type="match status" value="1"/>
</dbReference>
<dbReference type="Gene3D" id="1.10.287.110">
    <property type="entry name" value="DnaJ domain"/>
    <property type="match status" value="1"/>
</dbReference>
<dbReference type="Gene3D" id="2.10.230.10">
    <property type="entry name" value="Heat shock protein DnaJ, cysteine-rich domain"/>
    <property type="match status" value="1"/>
</dbReference>
<dbReference type="Gene3D" id="2.60.260.20">
    <property type="entry name" value="Urease metallochaperone UreE, N-terminal domain"/>
    <property type="match status" value="2"/>
</dbReference>
<dbReference type="HAMAP" id="MF_01152">
    <property type="entry name" value="DnaJ"/>
    <property type="match status" value="1"/>
</dbReference>
<dbReference type="InterPro" id="IPR012724">
    <property type="entry name" value="DnaJ"/>
</dbReference>
<dbReference type="InterPro" id="IPR002939">
    <property type="entry name" value="DnaJ_C"/>
</dbReference>
<dbReference type="InterPro" id="IPR001623">
    <property type="entry name" value="DnaJ_domain"/>
</dbReference>
<dbReference type="InterPro" id="IPR018253">
    <property type="entry name" value="DnaJ_domain_CS"/>
</dbReference>
<dbReference type="InterPro" id="IPR008971">
    <property type="entry name" value="HSP40/DnaJ_pept-bd"/>
</dbReference>
<dbReference type="InterPro" id="IPR001305">
    <property type="entry name" value="HSP_DnaJ_Cys-rich_dom"/>
</dbReference>
<dbReference type="InterPro" id="IPR036410">
    <property type="entry name" value="HSP_DnaJ_Cys-rich_dom_sf"/>
</dbReference>
<dbReference type="InterPro" id="IPR036869">
    <property type="entry name" value="J_dom_sf"/>
</dbReference>
<dbReference type="NCBIfam" id="TIGR02349">
    <property type="entry name" value="DnaJ_bact"/>
    <property type="match status" value="1"/>
</dbReference>
<dbReference type="NCBIfam" id="NF008035">
    <property type="entry name" value="PRK10767.1"/>
    <property type="match status" value="1"/>
</dbReference>
<dbReference type="PANTHER" id="PTHR43096:SF48">
    <property type="entry name" value="CHAPERONE PROTEIN DNAJ"/>
    <property type="match status" value="1"/>
</dbReference>
<dbReference type="PANTHER" id="PTHR43096">
    <property type="entry name" value="DNAJ HOMOLOG 1, MITOCHONDRIAL-RELATED"/>
    <property type="match status" value="1"/>
</dbReference>
<dbReference type="Pfam" id="PF00226">
    <property type="entry name" value="DnaJ"/>
    <property type="match status" value="1"/>
</dbReference>
<dbReference type="Pfam" id="PF01556">
    <property type="entry name" value="DnaJ_C"/>
    <property type="match status" value="1"/>
</dbReference>
<dbReference type="Pfam" id="PF00684">
    <property type="entry name" value="DnaJ_CXXCXGXG"/>
    <property type="match status" value="1"/>
</dbReference>
<dbReference type="PRINTS" id="PR00625">
    <property type="entry name" value="JDOMAIN"/>
</dbReference>
<dbReference type="SMART" id="SM00271">
    <property type="entry name" value="DnaJ"/>
    <property type="match status" value="1"/>
</dbReference>
<dbReference type="SUPFAM" id="SSF46565">
    <property type="entry name" value="Chaperone J-domain"/>
    <property type="match status" value="1"/>
</dbReference>
<dbReference type="SUPFAM" id="SSF57938">
    <property type="entry name" value="DnaJ/Hsp40 cysteine-rich domain"/>
    <property type="match status" value="1"/>
</dbReference>
<dbReference type="SUPFAM" id="SSF49493">
    <property type="entry name" value="HSP40/DnaJ peptide-binding domain"/>
    <property type="match status" value="2"/>
</dbReference>
<dbReference type="PROSITE" id="PS00636">
    <property type="entry name" value="DNAJ_1"/>
    <property type="match status" value="1"/>
</dbReference>
<dbReference type="PROSITE" id="PS50076">
    <property type="entry name" value="DNAJ_2"/>
    <property type="match status" value="1"/>
</dbReference>
<dbReference type="PROSITE" id="PS51188">
    <property type="entry name" value="ZF_CR"/>
    <property type="match status" value="1"/>
</dbReference>
<name>DNAJ_PARPJ</name>
<comment type="function">
    <text evidence="1">Participates actively in the response to hyperosmotic and heat shock by preventing the aggregation of stress-denatured proteins and by disaggregating proteins, also in an autonomous, DnaK-independent fashion. Unfolded proteins bind initially to DnaJ; upon interaction with the DnaJ-bound protein, DnaK hydrolyzes its bound ATP, resulting in the formation of a stable complex. GrpE releases ADP from DnaK; ATP binding to DnaK triggers the release of the substrate protein, thus completing the reaction cycle. Several rounds of ATP-dependent interactions between DnaJ, DnaK and GrpE are required for fully efficient folding. Also involved, together with DnaK and GrpE, in the DNA replication of plasmids through activation of initiation proteins.</text>
</comment>
<comment type="cofactor">
    <cofactor evidence="1">
        <name>Zn(2+)</name>
        <dbReference type="ChEBI" id="CHEBI:29105"/>
    </cofactor>
    <text evidence="1">Binds 2 Zn(2+) ions per monomer.</text>
</comment>
<comment type="subunit">
    <text evidence="1">Homodimer.</text>
</comment>
<comment type="subcellular location">
    <subcellularLocation>
        <location evidence="1">Cytoplasm</location>
    </subcellularLocation>
</comment>
<comment type="domain">
    <text evidence="1">The J domain is necessary and sufficient to stimulate DnaK ATPase activity. Zinc center 1 plays an important role in the autonomous, DnaK-independent chaperone activity of DnaJ. Zinc center 2 is essential for interaction with DnaK and for DnaJ activity.</text>
</comment>
<comment type="similarity">
    <text evidence="1">Belongs to the DnaJ family.</text>
</comment>
<feature type="chain" id="PRO_1000137668" description="Chaperone protein DnaJ">
    <location>
        <begin position="1"/>
        <end position="379"/>
    </location>
</feature>
<feature type="domain" description="J" evidence="1">
    <location>
        <begin position="5"/>
        <end position="70"/>
    </location>
</feature>
<feature type="repeat" description="CXXCXGXG motif">
    <location>
        <begin position="152"/>
        <end position="159"/>
    </location>
</feature>
<feature type="repeat" description="CXXCXGXG motif">
    <location>
        <begin position="169"/>
        <end position="176"/>
    </location>
</feature>
<feature type="repeat" description="CXXCXGXG motif">
    <location>
        <begin position="191"/>
        <end position="198"/>
    </location>
</feature>
<feature type="repeat" description="CXXCXGXG motif">
    <location>
        <begin position="205"/>
        <end position="212"/>
    </location>
</feature>
<feature type="zinc finger region" description="CR-type" evidence="1">
    <location>
        <begin position="139"/>
        <end position="217"/>
    </location>
</feature>
<feature type="binding site" evidence="1">
    <location>
        <position position="152"/>
    </location>
    <ligand>
        <name>Zn(2+)</name>
        <dbReference type="ChEBI" id="CHEBI:29105"/>
        <label>1</label>
    </ligand>
</feature>
<feature type="binding site" evidence="1">
    <location>
        <position position="155"/>
    </location>
    <ligand>
        <name>Zn(2+)</name>
        <dbReference type="ChEBI" id="CHEBI:29105"/>
        <label>1</label>
    </ligand>
</feature>
<feature type="binding site" evidence="1">
    <location>
        <position position="169"/>
    </location>
    <ligand>
        <name>Zn(2+)</name>
        <dbReference type="ChEBI" id="CHEBI:29105"/>
        <label>2</label>
    </ligand>
</feature>
<feature type="binding site" evidence="1">
    <location>
        <position position="172"/>
    </location>
    <ligand>
        <name>Zn(2+)</name>
        <dbReference type="ChEBI" id="CHEBI:29105"/>
        <label>2</label>
    </ligand>
</feature>
<feature type="binding site" evidence="1">
    <location>
        <position position="191"/>
    </location>
    <ligand>
        <name>Zn(2+)</name>
        <dbReference type="ChEBI" id="CHEBI:29105"/>
        <label>2</label>
    </ligand>
</feature>
<feature type="binding site" evidence="1">
    <location>
        <position position="194"/>
    </location>
    <ligand>
        <name>Zn(2+)</name>
        <dbReference type="ChEBI" id="CHEBI:29105"/>
        <label>2</label>
    </ligand>
</feature>
<feature type="binding site" evidence="1">
    <location>
        <position position="205"/>
    </location>
    <ligand>
        <name>Zn(2+)</name>
        <dbReference type="ChEBI" id="CHEBI:29105"/>
        <label>1</label>
    </ligand>
</feature>
<feature type="binding site" evidence="1">
    <location>
        <position position="208"/>
    </location>
    <ligand>
        <name>Zn(2+)</name>
        <dbReference type="ChEBI" id="CHEBI:29105"/>
        <label>1</label>
    </ligand>
</feature>
<sequence length="379" mass="40728">MAKRDYYEVLGVAKNASDDEIKKAYRKLAMKHHPDRNPGNKDAEGHFKEVKEAYEMLSDSQKRAAYDQYGHAGVDPNMGGAGAQGFGGFADAFGDIFGDIFGQAAGGAARGGGRAGPQVYRGADLRYSMEITLEQAAHGYDTQIRVPSWVSCEICHGSGAKPGTKPETCPTCSGSGSVRMSQGFFSIQQTCPKCHGTGTYIPEPCGHCHGAGKVKETKTLEVKIPAGIDDGMRIRSAGNGEPGINGGPSGDLYVEIHIKQHSVFERDGDDLHCQMPIPFTTAALGGEIEVPTLAGRASFTVPEGTQSGKTFRLRGKGIKGLRSSIAGDLYVHVQVETPVKLTEPQRDLLKQFEKALVEGGSRHSPQSKSWFDRVKSFFD</sequence>
<evidence type="ECO:0000255" key="1">
    <source>
        <dbReference type="HAMAP-Rule" id="MF_01152"/>
    </source>
</evidence>
<reference key="1">
    <citation type="journal article" date="2011" name="J. Bacteriol.">
        <title>Complete genome sequence of the plant growth-promoting endophyte Burkholderia phytofirmans strain PsJN.</title>
        <authorList>
            <person name="Weilharter A."/>
            <person name="Mitter B."/>
            <person name="Shin M.V."/>
            <person name="Chain P.S."/>
            <person name="Nowak J."/>
            <person name="Sessitsch A."/>
        </authorList>
    </citation>
    <scope>NUCLEOTIDE SEQUENCE [LARGE SCALE GENOMIC DNA]</scope>
    <source>
        <strain>DSM 17436 / LMG 22146 / PsJN</strain>
    </source>
</reference>
<gene>
    <name evidence="1" type="primary">dnaJ</name>
    <name type="ordered locus">Bphyt_0738</name>
</gene>
<protein>
    <recommendedName>
        <fullName evidence="1">Chaperone protein DnaJ</fullName>
    </recommendedName>
</protein>
<organism>
    <name type="scientific">Paraburkholderia phytofirmans (strain DSM 17436 / LMG 22146 / PsJN)</name>
    <name type="common">Burkholderia phytofirmans</name>
    <dbReference type="NCBI Taxonomy" id="398527"/>
    <lineage>
        <taxon>Bacteria</taxon>
        <taxon>Pseudomonadati</taxon>
        <taxon>Pseudomonadota</taxon>
        <taxon>Betaproteobacteria</taxon>
        <taxon>Burkholderiales</taxon>
        <taxon>Burkholderiaceae</taxon>
        <taxon>Paraburkholderia</taxon>
    </lineage>
</organism>
<proteinExistence type="inferred from homology"/>